<evidence type="ECO:0000250" key="1">
    <source>
        <dbReference type="UniProtKB" id="B6V8E6"/>
    </source>
</evidence>
<evidence type="ECO:0000250" key="2">
    <source>
        <dbReference type="UniProtKB" id="F1QGH7"/>
    </source>
</evidence>
<evidence type="ECO:0000250" key="3">
    <source>
        <dbReference type="UniProtKB" id="P35222"/>
    </source>
</evidence>
<evidence type="ECO:0000250" key="4">
    <source>
        <dbReference type="UniProtKB" id="Q02248"/>
    </source>
</evidence>
<evidence type="ECO:0000256" key="5">
    <source>
        <dbReference type="SAM" id="MobiDB-lite"/>
    </source>
</evidence>
<evidence type="ECO:0000269" key="6">
    <source>
    </source>
</evidence>
<evidence type="ECO:0000269" key="7">
    <source>
    </source>
</evidence>
<evidence type="ECO:0000269" key="8">
    <source>
    </source>
</evidence>
<evidence type="ECO:0000303" key="9">
    <source>
    </source>
</evidence>
<evidence type="ECO:0000305" key="10"/>
<name>CTNB1_XENLA</name>
<organism>
    <name type="scientific">Xenopus laevis</name>
    <name type="common">African clawed frog</name>
    <dbReference type="NCBI Taxonomy" id="8355"/>
    <lineage>
        <taxon>Eukaryota</taxon>
        <taxon>Metazoa</taxon>
        <taxon>Chordata</taxon>
        <taxon>Craniata</taxon>
        <taxon>Vertebrata</taxon>
        <taxon>Euteleostomi</taxon>
        <taxon>Amphibia</taxon>
        <taxon>Batrachia</taxon>
        <taxon>Anura</taxon>
        <taxon>Pipoidea</taxon>
        <taxon>Pipidae</taxon>
        <taxon>Xenopodinae</taxon>
        <taxon>Xenopus</taxon>
        <taxon>Xenopus</taxon>
    </lineage>
</organism>
<feature type="chain" id="PRO_0000064276" description="Catenin beta-1">
    <location>
        <begin position="1"/>
        <end position="781"/>
    </location>
</feature>
<feature type="repeat" description="ARM 1">
    <location>
        <begin position="141"/>
        <end position="180"/>
    </location>
</feature>
<feature type="repeat" description="ARM 2">
    <location>
        <begin position="225"/>
        <end position="264"/>
    </location>
</feature>
<feature type="repeat" description="ARM 3">
    <location>
        <begin position="267"/>
        <end position="306"/>
    </location>
</feature>
<feature type="repeat" description="ARM 4">
    <location>
        <begin position="351"/>
        <end position="390"/>
    </location>
</feature>
<feature type="repeat" description="ARM 5">
    <location>
        <begin position="391"/>
        <end position="429"/>
    </location>
</feature>
<feature type="repeat" description="ARM 6">
    <location>
        <begin position="432"/>
        <end position="473"/>
    </location>
</feature>
<feature type="repeat" description="ARM 7">
    <location>
        <begin position="479"/>
        <end position="519"/>
    </location>
</feature>
<feature type="repeat" description="ARM 8">
    <location>
        <begin position="521"/>
        <end position="562"/>
    </location>
</feature>
<feature type="repeat" description="ARM 9">
    <location>
        <begin position="584"/>
        <end position="623"/>
    </location>
</feature>
<feature type="repeat" description="ARM 10">
    <location>
        <begin position="625"/>
        <end position="664"/>
    </location>
</feature>
<feature type="region of interest" description="Disordered" evidence="5">
    <location>
        <begin position="34"/>
        <end position="56"/>
    </location>
</feature>
<feature type="region of interest" description="Disordered" evidence="5">
    <location>
        <begin position="735"/>
        <end position="781"/>
    </location>
</feature>
<feature type="compositionally biased region" description="Basic and acidic residues" evidence="5">
    <location>
        <begin position="735"/>
        <end position="745"/>
    </location>
</feature>
<dbReference type="EMBL" id="M77013">
    <property type="protein sequence ID" value="AAA49670.1"/>
    <property type="molecule type" value="mRNA"/>
</dbReference>
<dbReference type="PIR" id="S35099">
    <property type="entry name" value="S35099"/>
</dbReference>
<dbReference type="SMR" id="P26233"/>
<dbReference type="DIP" id="DIP-44044N"/>
<dbReference type="IntAct" id="P26233">
    <property type="interactions" value="8"/>
</dbReference>
<dbReference type="MINT" id="P26233"/>
<dbReference type="AGR" id="Xenbase:XB-GENE-6254184"/>
<dbReference type="Xenbase" id="XB-GENE-6254184">
    <property type="gene designation" value="ctnnb1.L"/>
</dbReference>
<dbReference type="Proteomes" id="UP000186698">
    <property type="component" value="Unplaced"/>
</dbReference>
<dbReference type="GO" id="GO:0005912">
    <property type="term" value="C:adherens junction"/>
    <property type="evidence" value="ECO:0000318"/>
    <property type="project" value="GO_Central"/>
</dbReference>
<dbReference type="GO" id="GO:0045178">
    <property type="term" value="C:basal part of cell"/>
    <property type="evidence" value="ECO:0000314"/>
    <property type="project" value="BHF-UCL"/>
</dbReference>
<dbReference type="GO" id="GO:0016342">
    <property type="term" value="C:catenin complex"/>
    <property type="evidence" value="ECO:0000318"/>
    <property type="project" value="GO_Central"/>
</dbReference>
<dbReference type="GO" id="GO:0005911">
    <property type="term" value="C:cell-cell junction"/>
    <property type="evidence" value="ECO:0000250"/>
    <property type="project" value="UniProtKB"/>
</dbReference>
<dbReference type="GO" id="GO:0005737">
    <property type="term" value="C:cytoplasm"/>
    <property type="evidence" value="ECO:0000318"/>
    <property type="project" value="GO_Central"/>
</dbReference>
<dbReference type="GO" id="GO:0014704">
    <property type="term" value="C:intercalated disc"/>
    <property type="evidence" value="ECO:0000314"/>
    <property type="project" value="UniProtKB"/>
</dbReference>
<dbReference type="GO" id="GO:0016020">
    <property type="term" value="C:membrane"/>
    <property type="evidence" value="ECO:0000314"/>
    <property type="project" value="UniProtKB"/>
</dbReference>
<dbReference type="GO" id="GO:0005654">
    <property type="term" value="C:nucleoplasm"/>
    <property type="evidence" value="ECO:0000304"/>
    <property type="project" value="Reactome"/>
</dbReference>
<dbReference type="GO" id="GO:0005634">
    <property type="term" value="C:nucleus"/>
    <property type="evidence" value="ECO:0000314"/>
    <property type="project" value="UniProtKB"/>
</dbReference>
<dbReference type="GO" id="GO:0045294">
    <property type="term" value="F:alpha-catenin binding"/>
    <property type="evidence" value="ECO:0000318"/>
    <property type="project" value="GO_Central"/>
</dbReference>
<dbReference type="GO" id="GO:0045296">
    <property type="term" value="F:cadherin binding"/>
    <property type="evidence" value="ECO:0000318"/>
    <property type="project" value="GO_Central"/>
</dbReference>
<dbReference type="GO" id="GO:0016922">
    <property type="term" value="F:nuclear receptor binding"/>
    <property type="evidence" value="ECO:0000318"/>
    <property type="project" value="GO_Central"/>
</dbReference>
<dbReference type="GO" id="GO:0019903">
    <property type="term" value="F:protein phosphatase binding"/>
    <property type="evidence" value="ECO:0000318"/>
    <property type="project" value="GO_Central"/>
</dbReference>
<dbReference type="GO" id="GO:0003713">
    <property type="term" value="F:transcription coactivator activity"/>
    <property type="evidence" value="ECO:0000318"/>
    <property type="project" value="GO_Central"/>
</dbReference>
<dbReference type="GO" id="GO:0009948">
    <property type="term" value="P:anterior/posterior axis specification"/>
    <property type="evidence" value="ECO:0000315"/>
    <property type="project" value="Xenbase"/>
</dbReference>
<dbReference type="GO" id="GO:0003401">
    <property type="term" value="P:axis elongation"/>
    <property type="evidence" value="ECO:0000315"/>
    <property type="project" value="Xenbase"/>
</dbReference>
<dbReference type="GO" id="GO:0060070">
    <property type="term" value="P:canonical Wnt signaling pathway"/>
    <property type="evidence" value="ECO:0000315"/>
    <property type="project" value="BHF-UCL"/>
</dbReference>
<dbReference type="GO" id="GO:0048738">
    <property type="term" value="P:cardiac muscle tissue development"/>
    <property type="evidence" value="ECO:0000315"/>
    <property type="project" value="BHF-UCL"/>
</dbReference>
<dbReference type="GO" id="GO:0001502">
    <property type="term" value="P:cartilage condensation"/>
    <property type="evidence" value="ECO:0000315"/>
    <property type="project" value="AgBase"/>
</dbReference>
<dbReference type="GO" id="GO:0098609">
    <property type="term" value="P:cell-cell adhesion"/>
    <property type="evidence" value="ECO:0000318"/>
    <property type="project" value="GO_Central"/>
</dbReference>
<dbReference type="GO" id="GO:0002062">
    <property type="term" value="P:chondrocyte differentiation"/>
    <property type="evidence" value="ECO:0000315"/>
    <property type="project" value="AgBase"/>
</dbReference>
<dbReference type="GO" id="GO:0031076">
    <property type="term" value="P:embryonic camera-type eye development"/>
    <property type="evidence" value="ECO:0000315"/>
    <property type="project" value="BHF-UCL"/>
</dbReference>
<dbReference type="GO" id="GO:0061037">
    <property type="term" value="P:negative regulation of cartilage development"/>
    <property type="evidence" value="ECO:0000315"/>
    <property type="project" value="AgBase"/>
</dbReference>
<dbReference type="GO" id="GO:0030336">
    <property type="term" value="P:negative regulation of cell migration"/>
    <property type="evidence" value="ECO:0000315"/>
    <property type="project" value="AgBase"/>
</dbReference>
<dbReference type="GO" id="GO:0032331">
    <property type="term" value="P:negative regulation of chondrocyte differentiation"/>
    <property type="evidence" value="ECO:0000315"/>
    <property type="project" value="AgBase"/>
</dbReference>
<dbReference type="GO" id="GO:0045892">
    <property type="term" value="P:negative regulation of DNA-templated transcription"/>
    <property type="evidence" value="ECO:0000315"/>
    <property type="project" value="AgBase"/>
</dbReference>
<dbReference type="GO" id="GO:0045893">
    <property type="term" value="P:positive regulation of DNA-templated transcription"/>
    <property type="evidence" value="ECO:0000315"/>
    <property type="project" value="AgBase"/>
</dbReference>
<dbReference type="GO" id="GO:0031398">
    <property type="term" value="P:positive regulation of protein ubiquitination"/>
    <property type="evidence" value="ECO:0000315"/>
    <property type="project" value="AgBase"/>
</dbReference>
<dbReference type="GO" id="GO:0045944">
    <property type="term" value="P:positive regulation of transcription by RNA polymerase II"/>
    <property type="evidence" value="ECO:0000318"/>
    <property type="project" value="GO_Central"/>
</dbReference>
<dbReference type="GO" id="GO:0042060">
    <property type="term" value="P:wound healing"/>
    <property type="evidence" value="ECO:0000315"/>
    <property type="project" value="AgBase"/>
</dbReference>
<dbReference type="CDD" id="cd21724">
    <property type="entry name" value="CTNNAbd_CTNNB1"/>
    <property type="match status" value="1"/>
</dbReference>
<dbReference type="FunFam" id="1.25.10.10:FF:000015">
    <property type="entry name" value="Catenin beta-1"/>
    <property type="match status" value="1"/>
</dbReference>
<dbReference type="Gene3D" id="1.25.10.10">
    <property type="entry name" value="Leucine-rich Repeat Variant"/>
    <property type="match status" value="1"/>
</dbReference>
<dbReference type="InterPro" id="IPR011989">
    <property type="entry name" value="ARM-like"/>
</dbReference>
<dbReference type="InterPro" id="IPR016024">
    <property type="entry name" value="ARM-type_fold"/>
</dbReference>
<dbReference type="InterPro" id="IPR000225">
    <property type="entry name" value="Armadillo"/>
</dbReference>
<dbReference type="InterPro" id="IPR013284">
    <property type="entry name" value="Beta-catenin"/>
</dbReference>
<dbReference type="PANTHER" id="PTHR45976">
    <property type="entry name" value="ARMADILLO SEGMENT POLARITY PROTEIN"/>
    <property type="match status" value="1"/>
</dbReference>
<dbReference type="Pfam" id="PF00514">
    <property type="entry name" value="Arm"/>
    <property type="match status" value="4"/>
</dbReference>
<dbReference type="PRINTS" id="PR01869">
    <property type="entry name" value="BCATNINFAMLY"/>
</dbReference>
<dbReference type="SMART" id="SM00185">
    <property type="entry name" value="ARM"/>
    <property type="match status" value="12"/>
</dbReference>
<dbReference type="SUPFAM" id="SSF48371">
    <property type="entry name" value="ARM repeat"/>
    <property type="match status" value="1"/>
</dbReference>
<dbReference type="PROSITE" id="PS50176">
    <property type="entry name" value="ARM_REPEAT"/>
    <property type="match status" value="9"/>
</dbReference>
<accession>P26233</accession>
<sequence length="781" mass="85449">MATQADLMELDMAMEPDRKAAVSHWQQQSYLDSGIHSGATTTAPSLSGKGNPEDEDVDTNQVLYEWEQGFSQSFTQDQVADIDGQYAMTRAQRVRAAMFPETLDEGMQIPSTQFDSAHPTNVQRLAEPSQMLKHAVVNLINYQDDAELATRAIPELTKLLNDEDQVVVNKAAVMVHQLSKKEASRHAIMRSPQMVSAIVRTMQNTNDVETARCTAGTLHNLSHHREGLLAIFKSGGIPALVKMLGSPVDSVLFYAITTLHNLLLHQEGAKMAVRLAGGLQKMVALLNKTNVKFLAITTDCLQILAYGNQESKLIILASGGPQALVNIMRTYSYEKLLWTTSRVLKVLSVCSSNKPAIVEAGGMQALGLHLTDSSQRLVQNCLWTLRNLSDAATKQEGMEGLLGTLVQLLGSDDINVVTCAAGILSNLTCNNYKNKMMVCQVGGIEALVRTVLRAGDREDITEPAICALRHLTSRHQEAEMAQNAVRLHYGLPVVVKLLHPPSHWPLIKATVGLIRNLALCPANHAPLREQGAIPRLVQLLVRAHQDTQRRTSIGGTQQQFVEGVRMEEIVEGCTGALHILARDIHNRIVIRGLNTIPLFVQLLYSPIENIQRVAAGVLCDVAQDKEAAEAIEAEGATAPLTELLHSRNEGVATYAAAVLFRMSEDKPQDYKKRLSVELTSSLFRTEPMPWNEAADLGLDIGAQGEPLGYRQDDSSYRSFHAAGYGQDAMGMDSMMDHDMGGHHPGADYPVDGLPDLSHAQDLMDGLPPGDSNQLAWFDTDL</sequence>
<gene>
    <name evidence="4" type="primary">ctnnb1</name>
</gene>
<comment type="function">
    <text evidence="2 3 4">Key downstream component of the canonical Wnt signaling pathway. In the absence of Wnt, forms a complex with axin1, axin2, apc, csnk1a1 and gsk3b that promotes phosphorylation on N-terminal Ser and Thr residues and ubiquitination of ctnnb1 and its subsequent degradation by the proteasome. In the presence of Wnt ligand, ctnnb1 is not ubiquitinated and accumulates in the nucleus, where it acts as a coactivator for transcription factors of the TCF/LEF family, leading to activate Wnt responsive genes (By similarity). Plays a key role in dorsoventral patterning: in prospective ventral blastomeres, its down-regulation by axin1 and axin2 leads to inhibit the Wnt signaling pathway, while in prospective dorsal blastomeres, degradation of axin results in stabilization and nuclear translocation of ctnnb1 (By similarity).</text>
</comment>
<comment type="subunit">
    <text evidence="6 8">Interacts with EP-Cadherin/CDH3 (PubMed:17052462). Interacts with custos; the interaction is positively regulated by Wnt stimulation (PubMed:25157132).</text>
</comment>
<comment type="interaction">
    <interactant intactId="EBI-7373758">
        <id>P26233</id>
    </interactant>
    <interactant intactId="EBI-7373787">
        <id>A0SNQ7</id>
        <label>tshz3.L</label>
    </interactant>
    <organismsDiffer>false</organismsDiffer>
    <experiments>3</experiments>
</comment>
<comment type="interaction">
    <interactant intactId="EBI-7373758">
        <id>P26233</id>
    </interactant>
    <interactant intactId="EBI-9106822">
        <id>Q61473</id>
        <label>Sox17</label>
    </interactant>
    <organismsDiffer>true</organismsDiffer>
    <experiments>3</experiments>
</comment>
<comment type="interaction">
    <interactant intactId="EBI-7373758">
        <id>P26233</id>
    </interactant>
    <interactant intactId="EBI-533224">
        <id>P15884</id>
        <label>TCF4</label>
    </interactant>
    <organismsDiffer>true</organismsDiffer>
    <experiments>2</experiments>
</comment>
<comment type="subcellular location">
    <subcellularLocation>
        <location evidence="3">Cytoplasm</location>
    </subcellularLocation>
    <subcellularLocation>
        <location evidence="8">Nucleus</location>
    </subcellularLocation>
    <subcellularLocation>
        <location evidence="2">Cell membrane</location>
    </subcellularLocation>
    <text evidence="1 3 8">Cytoplasmic when it is un-stable (highly phosphorylated). Translocates to the nucleus when it is stabilized (low level of phosphorylation). The majority of beta-catenin is localized to the cell membrane (By similarity). Reduced nuclear localization seen in the presence of custos (PubMed:25157132).</text>
</comment>
<comment type="tissue specificity">
    <text evidence="7">Expressed at intercalated disks in the heart (at protein level).</text>
</comment>
<comment type="PTM">
    <text evidence="3">Phosphorylation by gsk3b promotes ubiquitination and subsequent degradation by the proteasome.</text>
</comment>
<comment type="PTM">
    <text evidence="3">Ubiquitinated when phosphorylated by gsk3b, leading to its degradation.</text>
</comment>
<comment type="similarity">
    <text evidence="10">Belongs to the beta-catenin family.</text>
</comment>
<protein>
    <recommendedName>
        <fullName evidence="4">Catenin beta-1</fullName>
    </recommendedName>
    <alternativeName>
        <fullName evidence="9">Beta-catenin</fullName>
    </alternativeName>
</protein>
<reference key="1">
    <citation type="journal article" date="1991" name="Science">
        <title>A homolog of the armadillo protein in Drosophila (plakoglobin) associated with E-cadherin.</title>
        <authorList>
            <person name="McCrea P.D."/>
            <person name="Turck C.W."/>
            <person name="Gumbiner B.M."/>
        </authorList>
    </citation>
    <scope>NUCLEOTIDE SEQUENCE [MRNA]</scope>
    <scope>PARTIAL PROTEIN SEQUENCE</scope>
    <source>
        <tissue>Brain</tissue>
    </source>
</reference>
<reference key="2">
    <citation type="journal article" date="2006" name="Mol. Cell">
        <title>Crystal structure of a beta-catenin/BCL9/Tcf4 complex.</title>
        <authorList>
            <person name="Sampietro J."/>
            <person name="Dahlberg C.L."/>
            <person name="Cho U.S."/>
            <person name="Hinds T.R."/>
            <person name="Kimelman D."/>
            <person name="Xu W."/>
        </authorList>
    </citation>
    <scope>INTERACTION WITH CDH3</scope>
</reference>
<reference key="3">
    <citation type="journal article" date="2008" name="PLoS ONE">
        <title>Emergence of Xin demarcates a key innovation in heart evolution.</title>
        <authorList>
            <person name="Grosskurth S.E."/>
            <person name="Bhattacharya D."/>
            <person name="Wang Q."/>
            <person name="Lin J.J."/>
        </authorList>
    </citation>
    <scope>TISSUE SPECIFICITY</scope>
</reference>
<reference key="4">
    <citation type="journal article" date="2014" name="Proc. Natl. Acad. Sci. U.S.A.">
        <title>Custos controls beta-catenin to regulate head development during vertebrate embryogenesis.</title>
        <authorList>
            <person name="Komiya Y."/>
            <person name="Mandrekar N."/>
            <person name="Sato A."/>
            <person name="Dawid I.B."/>
            <person name="Habas R."/>
        </authorList>
    </citation>
    <scope>INTERACTION WITH CUSTOS</scope>
    <scope>SUBCELLULAR LOCATION</scope>
</reference>
<proteinExistence type="evidence at protein level"/>
<keyword id="KW-0010">Activator</keyword>
<keyword id="KW-1003">Cell membrane</keyword>
<keyword id="KW-0963">Cytoplasm</keyword>
<keyword id="KW-0903">Direct protein sequencing</keyword>
<keyword id="KW-0472">Membrane</keyword>
<keyword id="KW-0539">Nucleus</keyword>
<keyword id="KW-0597">Phosphoprotein</keyword>
<keyword id="KW-1185">Reference proteome</keyword>
<keyword id="KW-0677">Repeat</keyword>
<keyword id="KW-0804">Transcription</keyword>
<keyword id="KW-0805">Transcription regulation</keyword>
<keyword id="KW-0832">Ubl conjugation</keyword>
<keyword id="KW-0879">Wnt signaling pathway</keyword>